<reference key="1">
    <citation type="journal article" date="2005" name="Jpn. Agric. Res. Q.">
        <title>Genome sequence of Xanthomonas oryzae pv. oryzae suggests contribution of large numbers of effector genes and insertion sequences to its race diversity.</title>
        <authorList>
            <person name="Ochiai H."/>
            <person name="Inoue Y."/>
            <person name="Takeya M."/>
            <person name="Sasaki A."/>
            <person name="Kaku H."/>
        </authorList>
    </citation>
    <scope>NUCLEOTIDE SEQUENCE [LARGE SCALE GENOMIC DNA]</scope>
    <source>
        <strain>MAFF 311018</strain>
    </source>
</reference>
<protein>
    <recommendedName>
        <fullName evidence="1">Transcriptional repressor NrdR</fullName>
    </recommendedName>
</protein>
<feature type="chain" id="PRO_0000230910" description="Transcriptional repressor NrdR">
    <location>
        <begin position="1"/>
        <end position="174"/>
    </location>
</feature>
<feature type="domain" description="ATP-cone" evidence="1">
    <location>
        <begin position="49"/>
        <end position="139"/>
    </location>
</feature>
<feature type="zinc finger region" evidence="1">
    <location>
        <begin position="3"/>
        <end position="34"/>
    </location>
</feature>
<comment type="function">
    <text evidence="1">Negatively regulates transcription of bacterial ribonucleotide reductase nrd genes and operons by binding to NrdR-boxes.</text>
</comment>
<comment type="cofactor">
    <cofactor evidence="1">
        <name>Zn(2+)</name>
        <dbReference type="ChEBI" id="CHEBI:29105"/>
    </cofactor>
    <text evidence="1">Binds 1 zinc ion.</text>
</comment>
<comment type="similarity">
    <text evidence="1">Belongs to the NrdR family.</text>
</comment>
<accession>Q2NZ85</accession>
<sequence>MHCPFCQHSDTRVIDSRVSEDGTTIRRRRECEACGERFSTLETIELKLPTVVKSDGGREAFDARKLRTSFDRALQKRPVAEEQIEAAVRSVVHQLRMSGEREVGSLRVGEYVMVELRKLDHVGYVRFASVYRSFQDVADFREEIEKLERELPVGSEQLPLLEVALERAGKPGKR</sequence>
<organism>
    <name type="scientific">Xanthomonas oryzae pv. oryzae (strain MAFF 311018)</name>
    <dbReference type="NCBI Taxonomy" id="342109"/>
    <lineage>
        <taxon>Bacteria</taxon>
        <taxon>Pseudomonadati</taxon>
        <taxon>Pseudomonadota</taxon>
        <taxon>Gammaproteobacteria</taxon>
        <taxon>Lysobacterales</taxon>
        <taxon>Lysobacteraceae</taxon>
        <taxon>Xanthomonas</taxon>
    </lineage>
</organism>
<dbReference type="EMBL" id="AP008229">
    <property type="protein sequence ID" value="BAE70392.1"/>
    <property type="molecule type" value="Genomic_DNA"/>
</dbReference>
<dbReference type="RefSeq" id="WP_011260261.1">
    <property type="nucleotide sequence ID" value="NC_007705.1"/>
</dbReference>
<dbReference type="SMR" id="Q2NZ85"/>
<dbReference type="KEGG" id="xom:XOO3637"/>
<dbReference type="HOGENOM" id="CLU_108412_0_0_6"/>
<dbReference type="GO" id="GO:0005524">
    <property type="term" value="F:ATP binding"/>
    <property type="evidence" value="ECO:0007669"/>
    <property type="project" value="UniProtKB-KW"/>
</dbReference>
<dbReference type="GO" id="GO:0003677">
    <property type="term" value="F:DNA binding"/>
    <property type="evidence" value="ECO:0007669"/>
    <property type="project" value="UniProtKB-KW"/>
</dbReference>
<dbReference type="GO" id="GO:0008270">
    <property type="term" value="F:zinc ion binding"/>
    <property type="evidence" value="ECO:0007669"/>
    <property type="project" value="UniProtKB-UniRule"/>
</dbReference>
<dbReference type="GO" id="GO:0045892">
    <property type="term" value="P:negative regulation of DNA-templated transcription"/>
    <property type="evidence" value="ECO:0007669"/>
    <property type="project" value="UniProtKB-UniRule"/>
</dbReference>
<dbReference type="HAMAP" id="MF_00440">
    <property type="entry name" value="NrdR"/>
    <property type="match status" value="1"/>
</dbReference>
<dbReference type="InterPro" id="IPR005144">
    <property type="entry name" value="ATP-cone_dom"/>
</dbReference>
<dbReference type="InterPro" id="IPR055173">
    <property type="entry name" value="NrdR-like_N"/>
</dbReference>
<dbReference type="InterPro" id="IPR003796">
    <property type="entry name" value="RNR_NrdR-like"/>
</dbReference>
<dbReference type="NCBIfam" id="TIGR00244">
    <property type="entry name" value="transcriptional regulator NrdR"/>
    <property type="match status" value="1"/>
</dbReference>
<dbReference type="PANTHER" id="PTHR30455">
    <property type="entry name" value="TRANSCRIPTIONAL REPRESSOR NRDR"/>
    <property type="match status" value="1"/>
</dbReference>
<dbReference type="PANTHER" id="PTHR30455:SF2">
    <property type="entry name" value="TRANSCRIPTIONAL REPRESSOR NRDR"/>
    <property type="match status" value="1"/>
</dbReference>
<dbReference type="Pfam" id="PF03477">
    <property type="entry name" value="ATP-cone"/>
    <property type="match status" value="1"/>
</dbReference>
<dbReference type="Pfam" id="PF22811">
    <property type="entry name" value="Zn_ribbon_NrdR"/>
    <property type="match status" value="1"/>
</dbReference>
<dbReference type="PROSITE" id="PS51161">
    <property type="entry name" value="ATP_CONE"/>
    <property type="match status" value="1"/>
</dbReference>
<name>NRDR_XANOM</name>
<proteinExistence type="inferred from homology"/>
<evidence type="ECO:0000255" key="1">
    <source>
        <dbReference type="HAMAP-Rule" id="MF_00440"/>
    </source>
</evidence>
<gene>
    <name evidence="1" type="primary">nrdR</name>
    <name type="ordered locus">XOO3637</name>
</gene>
<keyword id="KW-0067">ATP-binding</keyword>
<keyword id="KW-0238">DNA-binding</keyword>
<keyword id="KW-0479">Metal-binding</keyword>
<keyword id="KW-0547">Nucleotide-binding</keyword>
<keyword id="KW-0678">Repressor</keyword>
<keyword id="KW-0804">Transcription</keyword>
<keyword id="KW-0805">Transcription regulation</keyword>
<keyword id="KW-0862">Zinc</keyword>
<keyword id="KW-0863">Zinc-finger</keyword>